<dbReference type="EC" id="1.-.-.-" evidence="6"/>
<dbReference type="EMBL" id="HF679023">
    <property type="protein sequence ID" value="CCT63358.1"/>
    <property type="molecule type" value="Genomic_DNA"/>
</dbReference>
<dbReference type="SMR" id="S0DS17"/>
<dbReference type="STRING" id="1279085.S0DS17"/>
<dbReference type="EnsemblFungi" id="CCT63358">
    <property type="protein sequence ID" value="CCT63358"/>
    <property type="gene ID" value="FFUJ_00006"/>
</dbReference>
<dbReference type="VEuPathDB" id="FungiDB:FFUJ_00006"/>
<dbReference type="HOGENOM" id="CLU_001570_14_7_1"/>
<dbReference type="Proteomes" id="UP000016800">
    <property type="component" value="Chromosome 1"/>
</dbReference>
<dbReference type="GO" id="GO:0020037">
    <property type="term" value="F:heme binding"/>
    <property type="evidence" value="ECO:0007669"/>
    <property type="project" value="InterPro"/>
</dbReference>
<dbReference type="GO" id="GO:0005506">
    <property type="term" value="F:iron ion binding"/>
    <property type="evidence" value="ECO:0007669"/>
    <property type="project" value="InterPro"/>
</dbReference>
<dbReference type="GO" id="GO:0004497">
    <property type="term" value="F:monooxygenase activity"/>
    <property type="evidence" value="ECO:0007669"/>
    <property type="project" value="UniProtKB-KW"/>
</dbReference>
<dbReference type="GO" id="GO:0016705">
    <property type="term" value="F:oxidoreductase activity, acting on paired donors, with incorporation or reduction of molecular oxygen"/>
    <property type="evidence" value="ECO:0007669"/>
    <property type="project" value="InterPro"/>
</dbReference>
<dbReference type="CDD" id="cd11061">
    <property type="entry name" value="CYP67-like"/>
    <property type="match status" value="1"/>
</dbReference>
<dbReference type="Gene3D" id="1.10.630.10">
    <property type="entry name" value="Cytochrome P450"/>
    <property type="match status" value="1"/>
</dbReference>
<dbReference type="InterPro" id="IPR001128">
    <property type="entry name" value="Cyt_P450"/>
</dbReference>
<dbReference type="InterPro" id="IPR017972">
    <property type="entry name" value="Cyt_P450_CS"/>
</dbReference>
<dbReference type="InterPro" id="IPR002401">
    <property type="entry name" value="Cyt_P450_E_grp-I"/>
</dbReference>
<dbReference type="InterPro" id="IPR036396">
    <property type="entry name" value="Cyt_P450_sf"/>
</dbReference>
<dbReference type="InterPro" id="IPR050121">
    <property type="entry name" value="Cytochrome_P450_monoxygenase"/>
</dbReference>
<dbReference type="PANTHER" id="PTHR24305">
    <property type="entry name" value="CYTOCHROME P450"/>
    <property type="match status" value="1"/>
</dbReference>
<dbReference type="PANTHER" id="PTHR24305:SF237">
    <property type="entry name" value="CYTOCHROME P450 MONOOXYGENASE ATNE-RELATED"/>
    <property type="match status" value="1"/>
</dbReference>
<dbReference type="Pfam" id="PF00067">
    <property type="entry name" value="p450"/>
    <property type="match status" value="1"/>
</dbReference>
<dbReference type="PRINTS" id="PR00463">
    <property type="entry name" value="EP450I"/>
</dbReference>
<dbReference type="PRINTS" id="PR00385">
    <property type="entry name" value="P450"/>
</dbReference>
<dbReference type="SUPFAM" id="SSF48264">
    <property type="entry name" value="Cytochrome P450"/>
    <property type="match status" value="1"/>
</dbReference>
<dbReference type="PROSITE" id="PS00086">
    <property type="entry name" value="CYTOCHROME_P450"/>
    <property type="match status" value="1"/>
</dbReference>
<keyword id="KW-0349">Heme</keyword>
<keyword id="KW-0408">Iron</keyword>
<keyword id="KW-0479">Metal-binding</keyword>
<keyword id="KW-0503">Monooxygenase</keyword>
<keyword id="KW-0560">Oxidoreductase</keyword>
<keyword id="KW-1185">Reference proteome</keyword>
<reference key="1">
    <citation type="journal article" date="2013" name="PLoS Pathog.">
        <title>Deciphering the cryptic genome: genome-wide analyses of the rice pathogen Fusarium fujikuroi reveal complex regulation of secondary metabolism and novel metabolites.</title>
        <authorList>
            <person name="Wiemann P."/>
            <person name="Sieber C.M.K."/>
            <person name="von Bargen K.W."/>
            <person name="Studt L."/>
            <person name="Niehaus E.-M."/>
            <person name="Espino J.J."/>
            <person name="Huss K."/>
            <person name="Michielse C.B."/>
            <person name="Albermann S."/>
            <person name="Wagner D."/>
            <person name="Bergner S.V."/>
            <person name="Connolly L.R."/>
            <person name="Fischer A."/>
            <person name="Reuter G."/>
            <person name="Kleigrewe K."/>
            <person name="Bald T."/>
            <person name="Wingfield B.D."/>
            <person name="Ophir R."/>
            <person name="Freeman S."/>
            <person name="Hippler M."/>
            <person name="Smith K.M."/>
            <person name="Brown D.W."/>
            <person name="Proctor R.H."/>
            <person name="Muensterkoetter M."/>
            <person name="Freitag M."/>
            <person name="Humpf H.-U."/>
            <person name="Gueldener U."/>
            <person name="Tudzynski B."/>
        </authorList>
    </citation>
    <scope>NUCLEOTIDE SEQUENCE [LARGE SCALE GENOMIC DNA]</scope>
    <source>
        <strain>CBS 195.34 / IMI 58289 / NRRL A-6831</strain>
    </source>
</reference>
<reference key="2">
    <citation type="journal article" date="2013" name="J. Nat. Prod.">
        <title>Structure elucidation and antimalarial activity of apicidin F: an apicidin-like compound produced by Fusarium fujikuroi.</title>
        <authorList>
            <person name="von Bargen K.W."/>
            <person name="Niehaus E.M."/>
            <person name="Bergander K."/>
            <person name="Brun R."/>
            <person name="Tudzynski B."/>
            <person name="Humpf H.U."/>
        </authorList>
    </citation>
    <scope>FUNCTION</scope>
    <scope>BIOTECHNOLOGY</scope>
</reference>
<reference key="3">
    <citation type="journal article" date="2014" name="PLoS ONE">
        <title>Apicidin F: characterization and genetic manipulation of a new secondary metabolite gene cluster in the rice pathogen Fusarium fujikuroi.</title>
        <authorList>
            <person name="Niehaus E.M."/>
            <person name="Janevska S."/>
            <person name="von Bargen K.W."/>
            <person name="Sieber C.M."/>
            <person name="Harrer H."/>
            <person name="Humpf H.U."/>
            <person name="Tudzynski B."/>
        </authorList>
    </citation>
    <scope>FUNCTION</scope>
    <scope>INDUCTION</scope>
</reference>
<feature type="chain" id="PRO_0000437163" description="Cytochrome P450 monooxygenase apf8">
    <location>
        <begin position="1"/>
        <end position="369"/>
    </location>
</feature>
<feature type="binding site" description="axial binding residue" evidence="1">
    <location>
        <position position="303"/>
    </location>
    <ligand>
        <name>heme</name>
        <dbReference type="ChEBI" id="CHEBI:30413"/>
    </ligand>
    <ligandPart>
        <name>Fe</name>
        <dbReference type="ChEBI" id="CHEBI:18248"/>
    </ligandPart>
</feature>
<sequence>MSYQSILLRQVNSLCDNLEEVARDENGGLIDMAMQSDYFTFDVMSEVIFGMAYNALKDTSYRFVTGALGSSNIRIGTLVQSPLPAMCRIDKYLFPESIQGRNKFLGFIGSLLRDRSKASFAGNGNVFSFLETAKDPDGGNQLSKSEIRAECATLVAAGTDTSSSTLAATLFYLSRNSKCYSRVSEEVRNAFSSHQDIKIGPELNSCVYLRACIEETLRMSPPVGAALWREIGPGGMNIGPLTLPAGVDVGTGIYSLHHNAAYHPEPFKYLPERWLVGEGSSTSESVELARSAFAPFSRGPRSCVGKGFAYHELTLTIAHILHRFDFSATEEDFALRHGSEGPGGINEFLLHDHVTGARSGPLLQFSMRR</sequence>
<evidence type="ECO:0000250" key="1">
    <source>
        <dbReference type="UniProtKB" id="P04798"/>
    </source>
</evidence>
<evidence type="ECO:0000269" key="2">
    <source>
    </source>
</evidence>
<evidence type="ECO:0000269" key="3">
    <source>
    </source>
</evidence>
<evidence type="ECO:0000303" key="4">
    <source>
    </source>
</evidence>
<evidence type="ECO:0000305" key="5"/>
<evidence type="ECO:0000305" key="6">
    <source>
    </source>
</evidence>
<name>APF8_GIBF5</name>
<organism>
    <name type="scientific">Gibberella fujikuroi (strain CBS 195.34 / IMI 58289 / NRRL A-6831)</name>
    <name type="common">Bakanae and foot rot disease fungus</name>
    <name type="synonym">Fusarium fujikuroi</name>
    <dbReference type="NCBI Taxonomy" id="1279085"/>
    <lineage>
        <taxon>Eukaryota</taxon>
        <taxon>Fungi</taxon>
        <taxon>Dikarya</taxon>
        <taxon>Ascomycota</taxon>
        <taxon>Pezizomycotina</taxon>
        <taxon>Sordariomycetes</taxon>
        <taxon>Hypocreomycetidae</taxon>
        <taxon>Hypocreales</taxon>
        <taxon>Nectriaceae</taxon>
        <taxon>Fusarium</taxon>
        <taxon>Fusarium fujikuroi species complex</taxon>
    </lineage>
</organism>
<comment type="function">
    <text evidence="2 3">Cytochrome P450 monooxygenase; part of the gene cluster that mediates the biosynthesis of the cyclic tetrapeptide apicidin F (APF) (PubMed:25058475). The non-ribosomal peptide synthetase apf1 incorporates four different amino acids to produce apicidin F: L-phenylalanine, D-pipecolic acid (D-pip), N-methoxy-L-tryptophan and L-2-aminooctanedioic acid (PubMed:25058475). L-Phenylalanine is the only proteinogenic amino acid directly used by apf1 (PubMed:24195442, PubMed:25058475). The 3 other apf1 substrates are non-proteinogenic and have to be modified by other enzymes of the cluster (PubMed:25058475). Lysine is converted to delta-1-pyrroline-5-carboxylate (P5C) which is reduced to L-pipecolic acid (L-pip) by apf3 (PubMed:25058475). L-pip is epimerized to D-pip, probably by apf1 activity, prior to incorporation (PubMed:25058475). L-Tryptophan is N-oxidyzed by one of the cytochrome P450 monooxygenases (apf7 or apf8), and further methylated at the hydroxy group by the O-methyltransferase apf6 to yield N-methoxy-L-tryptophan (PubMed:25058475). The synthesis of the fourth apf1 substrate is more complex (PubMed:25058475). The fatty acid synthase apf5 is involved in the synthesis of the octanoic acid backbone of L-2-aminooctanedioic acid by fixing one acetyl-CoA unit and three malonyl-CoA units (PubMed:25058475). Then one of the cytochrome P450 monooxygenases (apf7 or apf8) may oxidize this backbone to 2-oxooctanoic acid (PubMed:25058475). The aminotransferase apf4 is predicted to catalyze the exchange of the keto group with an amino group (PubMed:25058475). The next step would be the oxidation of 2-aminooctanoic acid by one of the cytochrome P450 monooxygenases (apf7 or apf8). The last step is the oxidation of 2-amino-8-hydroxyoctanoic acid to 2-aminooctanedioic acid is catalyzed by the FAD-dependent monooxygenase apf9 (PubMed:25058475).</text>
</comment>
<comment type="cofactor">
    <cofactor evidence="1">
        <name>heme</name>
        <dbReference type="ChEBI" id="CHEBI:30413"/>
    </cofactor>
</comment>
<comment type="pathway">
    <text evidence="3">Secondary metabolite biosynthesis.</text>
</comment>
<comment type="induction">
    <text evidence="3">Expression is positively regulated by the apicidin F cluster-specific transcription factor apf2 that binds to the eight-base-pair motif 5'-TGACGTGA-3' called the 'Api-box' that is found in all promoters of the apicidin F cluster except in the promoter region of apf2 itself (PubMed:25058475).</text>
</comment>
<comment type="biotechnology">
    <text evidence="2">Apicidin F, like the other known apicidins, is a cyclic tetrapeptides with anti-malarial properties via histone deacetylase inhibitory activity (PubMed:24195442).</text>
</comment>
<comment type="similarity">
    <text evidence="5">Belongs to the cytochrome P450 family.</text>
</comment>
<proteinExistence type="evidence at protein level"/>
<gene>
    <name evidence="4" type="primary">apf8</name>
    <name type="ORF">FFUJ_00006</name>
</gene>
<accession>S0DS17</accession>
<protein>
    <recommendedName>
        <fullName evidence="4">Cytochrome P450 monooxygenase apf8</fullName>
        <ecNumber evidence="6">1.-.-.-</ecNumber>
    </recommendedName>
    <alternativeName>
        <fullName evidence="4">Apicidin F synthesis protein 8</fullName>
    </alternativeName>
</protein>